<organism>
    <name type="scientific">Clostridioides difficile (strain 630)</name>
    <name type="common">Peptoclostridium difficile</name>
    <dbReference type="NCBI Taxonomy" id="272563"/>
    <lineage>
        <taxon>Bacteria</taxon>
        <taxon>Bacillati</taxon>
        <taxon>Bacillota</taxon>
        <taxon>Clostridia</taxon>
        <taxon>Peptostreptococcales</taxon>
        <taxon>Peptostreptococcaceae</taxon>
        <taxon>Clostridioides</taxon>
    </lineage>
</organism>
<name>IF1_CLOD6</name>
<protein>
    <recommendedName>
        <fullName evidence="1">Translation initiation factor IF-1</fullName>
    </recommendedName>
</protein>
<comment type="function">
    <text evidence="1">One of the essential components for the initiation of protein synthesis. Stabilizes the binding of IF-2 and IF-3 on the 30S subunit to which N-formylmethionyl-tRNA(fMet) subsequently binds. Helps modulate mRNA selection, yielding the 30S pre-initiation complex (PIC). Upon addition of the 50S ribosomal subunit IF-1, IF-2 and IF-3 are released leaving the mature 70S translation initiation complex.</text>
</comment>
<comment type="subunit">
    <text evidence="1">Component of the 30S ribosomal translation pre-initiation complex which assembles on the 30S ribosome in the order IF-2 and IF-3, IF-1 and N-formylmethionyl-tRNA(fMet); mRNA recruitment can occur at any time during PIC assembly.</text>
</comment>
<comment type="subcellular location">
    <subcellularLocation>
        <location evidence="1">Cytoplasm</location>
    </subcellularLocation>
</comment>
<comment type="similarity">
    <text evidence="1">Belongs to the IF-1 family.</text>
</comment>
<keyword id="KW-0002">3D-structure</keyword>
<keyword id="KW-0963">Cytoplasm</keyword>
<keyword id="KW-0396">Initiation factor</keyword>
<keyword id="KW-0648">Protein biosynthesis</keyword>
<keyword id="KW-1185">Reference proteome</keyword>
<keyword id="KW-0694">RNA-binding</keyword>
<keyword id="KW-0699">rRNA-binding</keyword>
<evidence type="ECO:0000255" key="1">
    <source>
        <dbReference type="HAMAP-Rule" id="MF_00075"/>
    </source>
</evidence>
<evidence type="ECO:0007829" key="2">
    <source>
        <dbReference type="PDB" id="6C00"/>
    </source>
</evidence>
<accession>Q18CI2</accession>
<reference key="1">
    <citation type="journal article" date="2006" name="Nat. Genet.">
        <title>The multidrug-resistant human pathogen Clostridium difficile has a highly mobile, mosaic genome.</title>
        <authorList>
            <person name="Sebaihia M."/>
            <person name="Wren B.W."/>
            <person name="Mullany P."/>
            <person name="Fairweather N.F."/>
            <person name="Minton N."/>
            <person name="Stabler R."/>
            <person name="Thomson N.R."/>
            <person name="Roberts A.P."/>
            <person name="Cerdeno-Tarraga A.M."/>
            <person name="Wang H."/>
            <person name="Holden M.T.G."/>
            <person name="Wright A."/>
            <person name="Churcher C."/>
            <person name="Quail M.A."/>
            <person name="Baker S."/>
            <person name="Bason N."/>
            <person name="Brooks K."/>
            <person name="Chillingworth T."/>
            <person name="Cronin A."/>
            <person name="Davis P."/>
            <person name="Dowd L."/>
            <person name="Fraser A."/>
            <person name="Feltwell T."/>
            <person name="Hance Z."/>
            <person name="Holroyd S."/>
            <person name="Jagels K."/>
            <person name="Moule S."/>
            <person name="Mungall K."/>
            <person name="Price C."/>
            <person name="Rabbinowitsch E."/>
            <person name="Sharp S."/>
            <person name="Simmonds M."/>
            <person name="Stevens K."/>
            <person name="Unwin L."/>
            <person name="Whithead S."/>
            <person name="Dupuy B."/>
            <person name="Dougan G."/>
            <person name="Barrell B."/>
            <person name="Parkhill J."/>
        </authorList>
    </citation>
    <scope>NUCLEOTIDE SEQUENCE [LARGE SCALE GENOMIC DNA]</scope>
    <source>
        <strain>630</strain>
    </source>
</reference>
<proteinExistence type="evidence at protein level"/>
<dbReference type="EMBL" id="AM180355">
    <property type="protein sequence ID" value="CAJ66912.1"/>
    <property type="molecule type" value="Genomic_DNA"/>
</dbReference>
<dbReference type="RefSeq" id="WP_003421127.1">
    <property type="nucleotide sequence ID" value="NZ_JAUPES010000043.1"/>
</dbReference>
<dbReference type="RefSeq" id="YP_001086561.1">
    <property type="nucleotide sequence ID" value="NC_009089.1"/>
</dbReference>
<dbReference type="PDB" id="6C00">
    <property type="method" value="NMR"/>
    <property type="chains" value="A=1-72"/>
</dbReference>
<dbReference type="PDBsum" id="6C00"/>
<dbReference type="BMRB" id="Q18CI2"/>
<dbReference type="SMR" id="Q18CI2"/>
<dbReference type="STRING" id="272563.CD630_00940"/>
<dbReference type="EnsemblBacteria" id="CAJ66912">
    <property type="protein sequence ID" value="CAJ66912"/>
    <property type="gene ID" value="CD630_00940"/>
</dbReference>
<dbReference type="GeneID" id="66352595"/>
<dbReference type="KEGG" id="cdf:CD630_00940"/>
<dbReference type="KEGG" id="pdc:CDIF630_00163"/>
<dbReference type="PATRIC" id="fig|272563.120.peg.103"/>
<dbReference type="eggNOG" id="COG0361">
    <property type="taxonomic scope" value="Bacteria"/>
</dbReference>
<dbReference type="OrthoDB" id="9803250at2"/>
<dbReference type="PhylomeDB" id="Q18CI2"/>
<dbReference type="BioCyc" id="PDIF272563:G12WB-151-MONOMER"/>
<dbReference type="Proteomes" id="UP000001978">
    <property type="component" value="Chromosome"/>
</dbReference>
<dbReference type="GO" id="GO:0005829">
    <property type="term" value="C:cytosol"/>
    <property type="evidence" value="ECO:0007669"/>
    <property type="project" value="TreeGrafter"/>
</dbReference>
<dbReference type="GO" id="GO:0043022">
    <property type="term" value="F:ribosome binding"/>
    <property type="evidence" value="ECO:0007669"/>
    <property type="project" value="UniProtKB-UniRule"/>
</dbReference>
<dbReference type="GO" id="GO:0019843">
    <property type="term" value="F:rRNA binding"/>
    <property type="evidence" value="ECO:0007669"/>
    <property type="project" value="UniProtKB-UniRule"/>
</dbReference>
<dbReference type="GO" id="GO:0003743">
    <property type="term" value="F:translation initiation factor activity"/>
    <property type="evidence" value="ECO:0007669"/>
    <property type="project" value="UniProtKB-UniRule"/>
</dbReference>
<dbReference type="CDD" id="cd04451">
    <property type="entry name" value="S1_IF1"/>
    <property type="match status" value="1"/>
</dbReference>
<dbReference type="FunFam" id="2.40.50.140:FF:000002">
    <property type="entry name" value="Translation initiation factor IF-1"/>
    <property type="match status" value="1"/>
</dbReference>
<dbReference type="Gene3D" id="2.40.50.140">
    <property type="entry name" value="Nucleic acid-binding proteins"/>
    <property type="match status" value="1"/>
</dbReference>
<dbReference type="HAMAP" id="MF_00075">
    <property type="entry name" value="IF_1"/>
    <property type="match status" value="1"/>
</dbReference>
<dbReference type="InterPro" id="IPR012340">
    <property type="entry name" value="NA-bd_OB-fold"/>
</dbReference>
<dbReference type="InterPro" id="IPR006196">
    <property type="entry name" value="RNA-binding_domain_S1_IF1"/>
</dbReference>
<dbReference type="InterPro" id="IPR003029">
    <property type="entry name" value="S1_domain"/>
</dbReference>
<dbReference type="InterPro" id="IPR004368">
    <property type="entry name" value="TIF_IF1"/>
</dbReference>
<dbReference type="NCBIfam" id="TIGR00008">
    <property type="entry name" value="infA"/>
    <property type="match status" value="1"/>
</dbReference>
<dbReference type="PANTHER" id="PTHR33370">
    <property type="entry name" value="TRANSLATION INITIATION FACTOR IF-1, CHLOROPLASTIC"/>
    <property type="match status" value="1"/>
</dbReference>
<dbReference type="PANTHER" id="PTHR33370:SF1">
    <property type="entry name" value="TRANSLATION INITIATION FACTOR IF-1, CHLOROPLASTIC"/>
    <property type="match status" value="1"/>
</dbReference>
<dbReference type="Pfam" id="PF01176">
    <property type="entry name" value="eIF-1a"/>
    <property type="match status" value="1"/>
</dbReference>
<dbReference type="SMART" id="SM00316">
    <property type="entry name" value="S1"/>
    <property type="match status" value="1"/>
</dbReference>
<dbReference type="SUPFAM" id="SSF50249">
    <property type="entry name" value="Nucleic acid-binding proteins"/>
    <property type="match status" value="1"/>
</dbReference>
<dbReference type="PROSITE" id="PS50832">
    <property type="entry name" value="S1_IF1_TYPE"/>
    <property type="match status" value="1"/>
</dbReference>
<gene>
    <name evidence="1" type="primary">infA</name>
    <name type="ordered locus">CD630_00940</name>
</gene>
<feature type="chain" id="PRO_0000263785" description="Translation initiation factor IF-1">
    <location>
        <begin position="1"/>
        <end position="72"/>
    </location>
</feature>
<feature type="domain" description="S1-like" evidence="1">
    <location>
        <begin position="1"/>
        <end position="72"/>
    </location>
</feature>
<feature type="strand" evidence="2">
    <location>
        <begin position="7"/>
        <end position="17"/>
    </location>
</feature>
<feature type="turn" evidence="2">
    <location>
        <begin position="18"/>
        <end position="20"/>
    </location>
</feature>
<feature type="strand" evidence="2">
    <location>
        <begin position="21"/>
        <end position="25"/>
    </location>
</feature>
<feature type="strand" evidence="2">
    <location>
        <begin position="31"/>
        <end position="36"/>
    </location>
</feature>
<feature type="helix" evidence="2">
    <location>
        <begin position="38"/>
        <end position="42"/>
    </location>
</feature>
<feature type="strand" evidence="2">
    <location>
        <begin position="52"/>
        <end position="58"/>
    </location>
</feature>
<feature type="strand" evidence="2">
    <location>
        <begin position="64"/>
        <end position="70"/>
    </location>
</feature>
<sequence length="72" mass="8282">MAKKDVIELEGTVSEALPNAMFKVKLENGHEILCHISGKLRMNFIRILEGDKVNVELSPYDLTRGRITWRKK</sequence>